<organism>
    <name type="scientific">Zymoseptoria tritici (strain CBS 115943 / IPO323)</name>
    <name type="common">Speckled leaf blotch fungus</name>
    <name type="synonym">Septoria tritici</name>
    <dbReference type="NCBI Taxonomy" id="336722"/>
    <lineage>
        <taxon>Eukaryota</taxon>
        <taxon>Fungi</taxon>
        <taxon>Dikarya</taxon>
        <taxon>Ascomycota</taxon>
        <taxon>Pezizomycotina</taxon>
        <taxon>Dothideomycetes</taxon>
        <taxon>Dothideomycetidae</taxon>
        <taxon>Mycosphaerellales</taxon>
        <taxon>Mycosphaerellaceae</taxon>
        <taxon>Zymoseptoria</taxon>
    </lineage>
</organism>
<sequence>MQFTALVAALLSVAAVQAQRNPITITPQFDCGATNSQQYVARSGDTLTKIAQEIYHDVVGVCDIARANNLADPNRIDAGTPYTIPINCQTYDRNSCL</sequence>
<evidence type="ECO:0000255" key="1"/>
<evidence type="ECO:0000255" key="2">
    <source>
        <dbReference type="PROSITE-ProRule" id="PRU01118"/>
    </source>
</evidence>
<evidence type="ECO:0000269" key="3">
    <source>
    </source>
</evidence>
<evidence type="ECO:0000269" key="4">
    <source>
    </source>
</evidence>
<evidence type="ECO:0000269" key="5">
    <source>
    </source>
</evidence>
<evidence type="ECO:0000303" key="6">
    <source>
    </source>
</evidence>
<evidence type="ECO:0000305" key="7"/>
<evidence type="ECO:0000305" key="8">
    <source>
    </source>
</evidence>
<evidence type="ECO:0007744" key="9">
    <source>
        <dbReference type="PDB" id="6Q40"/>
    </source>
</evidence>
<evidence type="ECO:0007829" key="10">
    <source>
        <dbReference type="PDB" id="6Q40"/>
    </source>
</evidence>
<protein>
    <recommendedName>
        <fullName evidence="6">Secreted LysM effector Mg1LysM</fullName>
    </recommendedName>
    <alternativeName>
        <fullName evidence="6">LysM domain-containing protein Mg1LysM</fullName>
    </alternativeName>
    <alternativeName>
        <fullName evidence="6">One LysM domain-containing protein</fullName>
    </alternativeName>
</protein>
<name>LYSM1_ZYMTI</name>
<dbReference type="EMBL" id="CM001203">
    <property type="protein sequence ID" value="EGP85026.1"/>
    <property type="molecule type" value="Genomic_DNA"/>
</dbReference>
<dbReference type="RefSeq" id="XP_003850050.1">
    <property type="nucleotide sequence ID" value="XM_003850002.1"/>
</dbReference>
<dbReference type="PDB" id="6Q40">
    <property type="method" value="X-ray"/>
    <property type="resolution" value="2.41 A"/>
    <property type="chains" value="A/B/C/D=20-97"/>
</dbReference>
<dbReference type="PDBsum" id="6Q40"/>
<dbReference type="SMR" id="F9XHX3"/>
<dbReference type="UniLectin" id="F9XHX3"/>
<dbReference type="EnsemblFungi" id="Mycgr3T105487">
    <property type="protein sequence ID" value="Mycgr3P105487"/>
    <property type="gene ID" value="Mycgr3G105487"/>
</dbReference>
<dbReference type="GeneID" id="13394863"/>
<dbReference type="KEGG" id="ztr:MYCGRDRAFT_105487"/>
<dbReference type="HOGENOM" id="CLU_2348300_0_0_1"/>
<dbReference type="InParanoid" id="F9XHX3"/>
<dbReference type="OrthoDB" id="2107166at2759"/>
<dbReference type="PHI-base" id="PHI:11367"/>
<dbReference type="PHI-base" id="PHI:6495"/>
<dbReference type="Proteomes" id="UP000008062">
    <property type="component" value="Chromosome 8"/>
</dbReference>
<dbReference type="GO" id="GO:0005576">
    <property type="term" value="C:extracellular region"/>
    <property type="evidence" value="ECO:0007669"/>
    <property type="project" value="UniProtKB-SubCell"/>
</dbReference>
<dbReference type="GO" id="GO:0140593">
    <property type="term" value="C:host apoplast"/>
    <property type="evidence" value="ECO:0000304"/>
    <property type="project" value="PHI-base"/>
</dbReference>
<dbReference type="GO" id="GO:0008061">
    <property type="term" value="F:chitin binding"/>
    <property type="evidence" value="ECO:0000314"/>
    <property type="project" value="PHI-base"/>
</dbReference>
<dbReference type="GO" id="GO:0140320">
    <property type="term" value="F:PAMP receptor decoy activity"/>
    <property type="evidence" value="ECO:0000269"/>
    <property type="project" value="PHI-base"/>
</dbReference>
<dbReference type="GO" id="GO:0052034">
    <property type="term" value="P:effector-mediated suppression of host pattern-triggered immunity"/>
    <property type="evidence" value="ECO:0000269"/>
    <property type="project" value="PHI-base"/>
</dbReference>
<dbReference type="CDD" id="cd00118">
    <property type="entry name" value="LysM"/>
    <property type="match status" value="1"/>
</dbReference>
<dbReference type="Gene3D" id="3.10.350.10">
    <property type="entry name" value="LysM domain"/>
    <property type="match status" value="1"/>
</dbReference>
<dbReference type="InterPro" id="IPR018392">
    <property type="entry name" value="LysM_dom"/>
</dbReference>
<dbReference type="InterPro" id="IPR036779">
    <property type="entry name" value="LysM_dom_sf"/>
</dbReference>
<dbReference type="Pfam" id="PF01476">
    <property type="entry name" value="LysM"/>
    <property type="match status" value="1"/>
</dbReference>
<dbReference type="SMART" id="SM00257">
    <property type="entry name" value="LysM"/>
    <property type="match status" value="1"/>
</dbReference>
<dbReference type="SUPFAM" id="SSF54106">
    <property type="entry name" value="LysM domain"/>
    <property type="match status" value="1"/>
</dbReference>
<dbReference type="PROSITE" id="PS51782">
    <property type="entry name" value="LYSM"/>
    <property type="match status" value="1"/>
</dbReference>
<reference key="1">
    <citation type="journal article" date="2011" name="PLoS Genet.">
        <title>Finished genome of the fungal wheat pathogen Mycosphaerella graminicola reveals dispensome structure, chromosome plasticity, and stealth pathogenesis.</title>
        <authorList>
            <person name="Goodwin S.B."/>
            <person name="Ben M'barek S."/>
            <person name="Dhillon B."/>
            <person name="Wittenberg A.H.J."/>
            <person name="Crane C.F."/>
            <person name="Hane J.K."/>
            <person name="Foster A.J."/>
            <person name="Van der Lee T.A.J."/>
            <person name="Grimwood J."/>
            <person name="Aerts A."/>
            <person name="Antoniw J."/>
            <person name="Bailey A."/>
            <person name="Bluhm B."/>
            <person name="Bowler J."/>
            <person name="Bristow J."/>
            <person name="van der Burgt A."/>
            <person name="Canto-Canche B."/>
            <person name="Churchill A.C.L."/>
            <person name="Conde-Ferraez L."/>
            <person name="Cools H.J."/>
            <person name="Coutinho P.M."/>
            <person name="Csukai M."/>
            <person name="Dehal P."/>
            <person name="De Wit P."/>
            <person name="Donzelli B."/>
            <person name="van de Geest H.C."/>
            <person name="van Ham R.C.H.J."/>
            <person name="Hammond-Kosack K.E."/>
            <person name="Henrissat B."/>
            <person name="Kilian A."/>
            <person name="Kobayashi A.K."/>
            <person name="Koopmann E."/>
            <person name="Kourmpetis Y."/>
            <person name="Kuzniar A."/>
            <person name="Lindquist E."/>
            <person name="Lombard V."/>
            <person name="Maliepaard C."/>
            <person name="Martins N."/>
            <person name="Mehrabi R."/>
            <person name="Nap J.P.H."/>
            <person name="Ponomarenko A."/>
            <person name="Rudd J.J."/>
            <person name="Salamov A."/>
            <person name="Schmutz J."/>
            <person name="Schouten H.J."/>
            <person name="Shapiro H."/>
            <person name="Stergiopoulos I."/>
            <person name="Torriani S.F.F."/>
            <person name="Tu H."/>
            <person name="de Vries R.P."/>
            <person name="Waalwijk C."/>
            <person name="Ware S.B."/>
            <person name="Wiebenga A."/>
            <person name="Zwiers L.-H."/>
            <person name="Oliver R.P."/>
            <person name="Grigoriev I.V."/>
            <person name="Kema G.H.J."/>
        </authorList>
    </citation>
    <scope>NUCLEOTIDE SEQUENCE [LARGE SCALE GENOMIC DNA]</scope>
    <source>
        <strain>CBS 115943 / IPO323</strain>
    </source>
</reference>
<reference key="2">
    <citation type="journal article" date="2011" name="Plant Physiol.">
        <title>Analysis of two in planta expressed LysM effector homologs from the fungus Mycosphaerella graminicola reveals novel functional properties and varying contributions to virulence on wheat.</title>
        <authorList>
            <person name="Marshall R."/>
            <person name="Kombrink A."/>
            <person name="Motteram J."/>
            <person name="Loza-Reyes E."/>
            <person name="Lucas J."/>
            <person name="Hammond-Kosack K.E."/>
            <person name="Thomma B.P."/>
            <person name="Rudd J.J."/>
        </authorList>
    </citation>
    <scope>FUNCTION</scope>
    <scope>INDUCTION</scope>
    <scope>CHITIN-BINDING</scope>
    <scope>DOMAIN</scope>
    <source>
        <strain>CBS 115943 / IPO323</strain>
    </source>
</reference>
<reference key="3">
    <citation type="journal article" date="2021" name="Mol. Plant Pathol.">
        <title>Three LysM effectors of Zymoseptoria tritici collectively disarm chitin-triggered plant immunity.</title>
        <authorList>
            <person name="Tian H."/>
            <person name="MacKenzie C.I."/>
            <person name="Rodriguez-Moreno L."/>
            <person name="van den Berg G.C.M."/>
            <person name="Chen H."/>
            <person name="Rudd J.J."/>
            <person name="Mesters J.R."/>
            <person name="Thomma B.P.H.J."/>
        </authorList>
    </citation>
    <scope>FUNCTION</scope>
    <scope>DISRUPTION PHENOTYPE</scope>
    <scope>CHITIN-BINDING</scope>
    <scope>DOMAIN</scope>
    <source>
        <strain>CBS 115943 / IPO323</strain>
    </source>
</reference>
<reference evidence="9" key="4">
    <citation type="journal article" date="2020" name="PLoS Pathog.">
        <title>A secreted LysM effector protects fungal hyphae through chitin-dependent homodimer polymerization.</title>
        <authorList>
            <person name="Sanchez-Vallet A."/>
            <person name="Tian H."/>
            <person name="Rodriguez-Moreno L."/>
            <person name="Valkenburg D.J."/>
            <person name="Saleem-Batcha R."/>
            <person name="Wawra S."/>
            <person name="Kombrink A."/>
            <person name="Verhage L."/>
            <person name="de Jonge R."/>
            <person name="van Esse H.P."/>
            <person name="Zuccaro A."/>
            <person name="Croll D."/>
            <person name="Mesters J.R."/>
            <person name="Thomma B.P.H.J."/>
        </authorList>
    </citation>
    <scope>X-RAY CRYSTALLOGRAPHY (2.41 ANGSTROMS) OF 20-97 IN COMPLEX WITH CHITIN</scope>
    <scope>DISULFIDE BONDS</scope>
    <scope>FUNCTION</scope>
    <scope>SUBUNIT</scope>
    <scope>DISRUPTION PHENOTYPE</scope>
    <scope>SUBCELLULAR LOCATION</scope>
    <scope>DOMAIN</scope>
    <source>
        <strain>CBS 115943 / IPO323</strain>
    </source>
</reference>
<accession>F9XHX3</accession>
<comment type="function">
    <text evidence="3 4 5">Secreted effector that enables the plant pathogenic fungus to manipulate host defenses for successful infection (PubMed:21467214). Binds chitin but not cellulose or xylan (PubMed:21467214, PubMed:32574207, PubMed:33797163). Chitin-induced polymerization of homodimers forms a contiguous Mg1LysM highly oligomeric super-complexe that is anchored to the chitin in the fungal cell wall to prevent hydrolysis by host chitinases (PubMed:21467214, PubMed:32574207).</text>
</comment>
<comment type="subunit">
    <text evidence="4 5">Forms homodimers in a chitin-independent manner through interactions at the N-termini of Mg1LysM monomers (PubMed:32574207, PubMed:33797163). Homodimers are further polymerized in a chitin-dependent manner (PubMed:32574207).</text>
</comment>
<comment type="subcellular location">
    <subcellularLocation>
        <location evidence="4">Secreted</location>
    </subcellularLocation>
    <subcellularLocation>
        <location evidence="4">Secreted</location>
        <location evidence="4">Cell wall</location>
    </subcellularLocation>
</comment>
<comment type="induction">
    <text evidence="3">Expression is up-regulated during wheat leaf infection.</text>
</comment>
<comment type="domain">
    <text evidence="3 4 5">The LysM (lysin motif) domains are small globular domains involved in binding chitin in eukaryotes. Mg1LysM contains one LysM domain.</text>
</comment>
<comment type="disruption phenotype">
    <text evidence="4 5">Impairs protection against host chitinases and developes significantly more pycnidia.</text>
</comment>
<comment type="miscellaneous">
    <text evidence="7">In plants, chitin acts as a microbe-associated molecular pattern (MAMP) that is recognized by lysin motif (LysM)-containing plant cell surface-localized pattern recognition receptors (PRRs) that activate a plethora of downstream immune responses.</text>
</comment>
<comment type="similarity">
    <text evidence="7">Belongs to the secreted LysM effector family.</text>
</comment>
<gene>
    <name evidence="6" type="primary">Mg1LysM</name>
    <name type="ORF">MYCGRDRAFT_105487</name>
</gene>
<feature type="signal peptide" evidence="1">
    <location>
        <begin position="1"/>
        <end position="18"/>
    </location>
</feature>
<feature type="chain" id="PRO_0000460738" description="Secreted LysM effector Mg1LysM" evidence="1">
    <location>
        <begin position="19"/>
        <end position="97"/>
    </location>
</feature>
<feature type="domain" description="LysM" evidence="2">
    <location>
        <begin position="37"/>
        <end position="84"/>
    </location>
</feature>
<feature type="binding site" evidence="8 9">
    <location>
        <position position="44"/>
    </location>
    <ligand>
        <name>chitin</name>
        <dbReference type="ChEBI" id="CHEBI:17029"/>
    </ligand>
</feature>
<feature type="binding site" evidence="8 9">
    <location>
        <position position="48"/>
    </location>
    <ligand>
        <name>chitin</name>
        <dbReference type="ChEBI" id="CHEBI:17029"/>
    </ligand>
</feature>
<feature type="binding site" evidence="8 9">
    <location>
        <position position="74"/>
    </location>
    <ligand>
        <name>chitin</name>
        <dbReference type="ChEBI" id="CHEBI:17029"/>
    </ligand>
</feature>
<feature type="binding site" evidence="8 9">
    <location>
        <position position="76"/>
    </location>
    <ligand>
        <name>chitin</name>
        <dbReference type="ChEBI" id="CHEBI:17029"/>
    </ligand>
</feature>
<feature type="disulfide bond" evidence="4 9">
    <location>
        <begin position="31"/>
        <end position="88"/>
    </location>
</feature>
<feature type="disulfide bond" evidence="4 9">
    <location>
        <begin position="62"/>
        <end position="96"/>
    </location>
</feature>
<feature type="strand" evidence="10">
    <location>
        <begin position="23"/>
        <end position="25"/>
    </location>
</feature>
<feature type="strand" evidence="10">
    <location>
        <begin position="36"/>
        <end position="40"/>
    </location>
</feature>
<feature type="helix" evidence="10">
    <location>
        <begin position="47"/>
        <end position="52"/>
    </location>
</feature>
<feature type="turn" evidence="10">
    <location>
        <begin position="53"/>
        <end position="57"/>
    </location>
</feature>
<feature type="helix" evidence="10">
    <location>
        <begin position="61"/>
        <end position="67"/>
    </location>
</feature>
<feature type="strand" evidence="10">
    <location>
        <begin position="81"/>
        <end position="85"/>
    </location>
</feature>
<proteinExistence type="evidence at protein level"/>
<keyword id="KW-0002">3D-structure</keyword>
<keyword id="KW-0134">Cell wall</keyword>
<keyword id="KW-1015">Disulfide bond</keyword>
<keyword id="KW-1185">Reference proteome</keyword>
<keyword id="KW-0964">Secreted</keyword>
<keyword id="KW-0732">Signal</keyword>
<keyword id="KW-0843">Virulence</keyword>